<accession>C6ZH25</accession>
<accession>C6ZH26</accession>
<name>VP1_LYCMC</name>
<organism>
    <name type="scientific">Lychas mucronatus</name>
    <name type="common">Chinese swimming scorpion</name>
    <dbReference type="NCBI Taxonomy" id="172552"/>
    <lineage>
        <taxon>Eukaryota</taxon>
        <taxon>Metazoa</taxon>
        <taxon>Ecdysozoa</taxon>
        <taxon>Arthropoda</taxon>
        <taxon>Chelicerata</taxon>
        <taxon>Arachnida</taxon>
        <taxon>Scorpiones</taxon>
        <taxon>Buthida</taxon>
        <taxon>Buthoidea</taxon>
        <taxon>Buthidae</taxon>
        <taxon>Lychas</taxon>
    </lineage>
</organism>
<feature type="signal peptide" evidence="2">
    <location>
        <begin position="1"/>
        <end position="22"/>
    </location>
</feature>
<feature type="chain" id="PRO_0000403897" description="Venom protein TxLP11">
    <location>
        <begin position="23"/>
        <end position="117"/>
    </location>
</feature>
<feature type="splice variant" id="VSP_040458" description="In isoform VP1.1." evidence="3">
    <location>
        <begin position="70"/>
        <end position="117"/>
    </location>
</feature>
<dbReference type="EMBL" id="EU877533">
    <property type="protein sequence ID" value="ACJ63717.1"/>
    <property type="molecule type" value="Genomic_DNA"/>
</dbReference>
<dbReference type="EMBL" id="EU877534">
    <property type="protein sequence ID" value="ACJ63718.1"/>
    <property type="molecule type" value="Genomic_DNA"/>
</dbReference>
<dbReference type="SMR" id="C6ZH25"/>
<dbReference type="GO" id="GO:0005576">
    <property type="term" value="C:extracellular region"/>
    <property type="evidence" value="ECO:0007669"/>
    <property type="project" value="UniProtKB-SubCell"/>
</dbReference>
<proteinExistence type="inferred from homology"/>
<comment type="subcellular location">
    <subcellularLocation>
        <location evidence="1">Secreted</location>
    </subcellularLocation>
</comment>
<comment type="alternative products">
    <event type="alternative splicing"/>
    <isoform>
        <id>C6ZH25-1</id>
        <name>TxLP11</name>
        <sequence type="displayed"/>
    </isoform>
    <isoform>
        <id>C6ZH25-2</id>
        <name>VP1.1</name>
        <sequence type="described" ref="VSP_040458"/>
    </isoform>
</comment>
<comment type="tissue specificity">
    <text evidence="4">Expressed by the venom gland.</text>
</comment>
<comment type="PTM">
    <text evidence="1">Contains 4 disulfide bonds.</text>
</comment>
<keyword id="KW-0025">Alternative splicing</keyword>
<keyword id="KW-1015">Disulfide bond</keyword>
<keyword id="KW-0964">Secreted</keyword>
<keyword id="KW-0732">Signal</keyword>
<protein>
    <recommendedName>
        <fullName>Venom protein TxLP11</fullName>
    </recommendedName>
    <alternativeName>
        <fullName>Venom protein VP1.1</fullName>
    </alternativeName>
</protein>
<sequence>MNTKTLIVVFLVCLLVSEVVLARRCGGRGRRIKIKKIVRKLRPIVRVMKVITRMRTSRPRPRLRPCNSSDLQTTSYQVMQPISPKLKSCPVSLAICNRKCSRRGMKGRCQRRECVCY</sequence>
<evidence type="ECO:0000250" key="1"/>
<evidence type="ECO:0000255" key="2"/>
<evidence type="ECO:0000303" key="3">
    <source>
    </source>
</evidence>
<evidence type="ECO:0000305" key="4"/>
<reference key="1">
    <citation type="journal article" date="2009" name="Toxicon">
        <title>Characterization of LmTxLP11 and LmVP1.1 transcripts and genomic organizations: alternative splicing contributing to the diversity of scorpion venom peptides.</title>
        <authorList>
            <person name="Ma Y."/>
            <person name="Zhao R."/>
            <person name="Li S."/>
            <person name="Fan S."/>
            <person name="Wu Y.-L."/>
            <person name="Liu H."/>
            <person name="Cao Z.-J."/>
            <person name="Li W.-X."/>
        </authorList>
    </citation>
    <scope>NUCLEOTIDE SEQUENCE [GENOMIC DNA / MRNA] (ISOFORMS TXLP11 AND VP1.1)</scope>
    <scope>ALTERNATIVE SPLICING</scope>
    <source>
        <strain>Hainan</strain>
        <tissue>Venom gland</tissue>
    </source>
</reference>